<sequence>MDTIYALASARGKAGVAVLRLSGPRSHEAVQAFGVLLPPLRHAALRRLTWNDEVLDEALVLLFGAGASFTGETSAELHLHGSPAAVSSVLRVLSGLPGLRAAEAGEFTRRALENGRLDLAQVEGLADLIDAETEAQRRQAMRVFSGAIGERAERWRADLIRAAALLEATIDFADEDVPVDVTPEVLTLIDGLLADLRREVDGSRIAERIRDGFEVAIVGAPNAGKSTLLNALARREAAITSEIAGTTRDVIEVRMDLDGLPVTFLDTAGLRDTSDLVESLGIERAVTRAKAADLRVFLLDDSGPLPGITVQADDLVVQGKADLRPGHGLRLSGRTGEGVPELVAAIGERLLGRTAGAGSLTRERHRLAIERAIGAMESVRAELLRGQQHTELAADDLRRAIRSLDSLVGRVDVESLLGEIFASFCIGK</sequence>
<keyword id="KW-0963">Cytoplasm</keyword>
<keyword id="KW-0342">GTP-binding</keyword>
<keyword id="KW-0378">Hydrolase</keyword>
<keyword id="KW-0460">Magnesium</keyword>
<keyword id="KW-0479">Metal-binding</keyword>
<keyword id="KW-0547">Nucleotide-binding</keyword>
<keyword id="KW-0630">Potassium</keyword>
<keyword id="KW-0819">tRNA processing</keyword>
<reference key="1">
    <citation type="submission" date="2007-02" db="EMBL/GenBank/DDBJ databases">
        <title>Complete sequence of chromosome 1 of Rhodobacter sphaeroides ATCC 17029.</title>
        <authorList>
            <person name="Copeland A."/>
            <person name="Lucas S."/>
            <person name="Lapidus A."/>
            <person name="Barry K."/>
            <person name="Detter J.C."/>
            <person name="Glavina del Rio T."/>
            <person name="Hammon N."/>
            <person name="Israni S."/>
            <person name="Dalin E."/>
            <person name="Tice H."/>
            <person name="Pitluck S."/>
            <person name="Kiss H."/>
            <person name="Brettin T."/>
            <person name="Bruce D."/>
            <person name="Han C."/>
            <person name="Tapia R."/>
            <person name="Gilna P."/>
            <person name="Schmutz J."/>
            <person name="Larimer F."/>
            <person name="Land M."/>
            <person name="Hauser L."/>
            <person name="Kyrpides N."/>
            <person name="Mikhailova N."/>
            <person name="Richardson P."/>
            <person name="Mackenzie C."/>
            <person name="Choudhary M."/>
            <person name="Donohue T.J."/>
            <person name="Kaplan S."/>
        </authorList>
    </citation>
    <scope>NUCLEOTIDE SEQUENCE [LARGE SCALE GENOMIC DNA]</scope>
    <source>
        <strain>ATCC 17029 / ATH 2.4.9</strain>
    </source>
</reference>
<gene>
    <name evidence="1" type="primary">mnmE</name>
    <name evidence="1" type="synonym">trmE</name>
    <name type="ordered locus">Rsph17029_2891</name>
</gene>
<evidence type="ECO:0000255" key="1">
    <source>
        <dbReference type="HAMAP-Rule" id="MF_00379"/>
    </source>
</evidence>
<comment type="function">
    <text evidence="1">Exhibits a very high intrinsic GTPase hydrolysis rate. Involved in the addition of a carboxymethylaminomethyl (cmnm) group at the wobble position (U34) of certain tRNAs, forming tRNA-cmnm(5)s(2)U34.</text>
</comment>
<comment type="cofactor">
    <cofactor evidence="1">
        <name>K(+)</name>
        <dbReference type="ChEBI" id="CHEBI:29103"/>
    </cofactor>
    <text evidence="1">Binds 1 potassium ion per subunit.</text>
</comment>
<comment type="subunit">
    <text evidence="1">Homodimer. Heterotetramer of two MnmE and two MnmG subunits.</text>
</comment>
<comment type="subcellular location">
    <subcellularLocation>
        <location evidence="1">Cytoplasm</location>
    </subcellularLocation>
</comment>
<comment type="similarity">
    <text evidence="1">Belongs to the TRAFAC class TrmE-Era-EngA-EngB-Septin-like GTPase superfamily. TrmE GTPase family.</text>
</comment>
<feature type="chain" id="PRO_0000345888" description="tRNA modification GTPase MnmE">
    <location>
        <begin position="1"/>
        <end position="428"/>
    </location>
</feature>
<feature type="domain" description="TrmE-type G">
    <location>
        <begin position="212"/>
        <end position="351"/>
    </location>
</feature>
<feature type="binding site" evidence="1">
    <location>
        <position position="20"/>
    </location>
    <ligand>
        <name>(6S)-5-formyl-5,6,7,8-tetrahydrofolate</name>
        <dbReference type="ChEBI" id="CHEBI:57457"/>
    </ligand>
</feature>
<feature type="binding site" evidence="1">
    <location>
        <position position="76"/>
    </location>
    <ligand>
        <name>(6S)-5-formyl-5,6,7,8-tetrahydrofolate</name>
        <dbReference type="ChEBI" id="CHEBI:57457"/>
    </ligand>
</feature>
<feature type="binding site" evidence="1">
    <location>
        <position position="116"/>
    </location>
    <ligand>
        <name>(6S)-5-formyl-5,6,7,8-tetrahydrofolate</name>
        <dbReference type="ChEBI" id="CHEBI:57457"/>
    </ligand>
</feature>
<feature type="binding site" evidence="1">
    <location>
        <begin position="222"/>
        <end position="227"/>
    </location>
    <ligand>
        <name>GTP</name>
        <dbReference type="ChEBI" id="CHEBI:37565"/>
    </ligand>
</feature>
<feature type="binding site" evidence="1">
    <location>
        <position position="222"/>
    </location>
    <ligand>
        <name>K(+)</name>
        <dbReference type="ChEBI" id="CHEBI:29103"/>
    </ligand>
</feature>
<feature type="binding site" evidence="1">
    <location>
        <position position="226"/>
    </location>
    <ligand>
        <name>Mg(2+)</name>
        <dbReference type="ChEBI" id="CHEBI:18420"/>
    </ligand>
</feature>
<feature type="binding site" evidence="1">
    <location>
        <begin position="241"/>
        <end position="247"/>
    </location>
    <ligand>
        <name>GTP</name>
        <dbReference type="ChEBI" id="CHEBI:37565"/>
    </ligand>
</feature>
<feature type="binding site" evidence="1">
    <location>
        <position position="241"/>
    </location>
    <ligand>
        <name>K(+)</name>
        <dbReference type="ChEBI" id="CHEBI:29103"/>
    </ligand>
</feature>
<feature type="binding site" evidence="1">
    <location>
        <position position="243"/>
    </location>
    <ligand>
        <name>K(+)</name>
        <dbReference type="ChEBI" id="CHEBI:29103"/>
    </ligand>
</feature>
<feature type="binding site" evidence="1">
    <location>
        <position position="246"/>
    </location>
    <ligand>
        <name>K(+)</name>
        <dbReference type="ChEBI" id="CHEBI:29103"/>
    </ligand>
</feature>
<feature type="binding site" evidence="1">
    <location>
        <position position="247"/>
    </location>
    <ligand>
        <name>Mg(2+)</name>
        <dbReference type="ChEBI" id="CHEBI:18420"/>
    </ligand>
</feature>
<feature type="binding site" evidence="1">
    <location>
        <begin position="266"/>
        <end position="269"/>
    </location>
    <ligand>
        <name>GTP</name>
        <dbReference type="ChEBI" id="CHEBI:37565"/>
    </ligand>
</feature>
<feature type="binding site" evidence="1">
    <location>
        <position position="428"/>
    </location>
    <ligand>
        <name>(6S)-5-formyl-5,6,7,8-tetrahydrofolate</name>
        <dbReference type="ChEBI" id="CHEBI:57457"/>
    </ligand>
</feature>
<protein>
    <recommendedName>
        <fullName evidence="1">tRNA modification GTPase MnmE</fullName>
        <ecNumber evidence="1">3.6.-.-</ecNumber>
    </recommendedName>
</protein>
<name>MNME_CERS1</name>
<proteinExistence type="inferred from homology"/>
<accession>A3PNS7</accession>
<organism>
    <name type="scientific">Cereibacter sphaeroides (strain ATCC 17029 / ATH 2.4.9)</name>
    <name type="common">Rhodobacter sphaeroides</name>
    <dbReference type="NCBI Taxonomy" id="349101"/>
    <lineage>
        <taxon>Bacteria</taxon>
        <taxon>Pseudomonadati</taxon>
        <taxon>Pseudomonadota</taxon>
        <taxon>Alphaproteobacteria</taxon>
        <taxon>Rhodobacterales</taxon>
        <taxon>Paracoccaceae</taxon>
        <taxon>Cereibacter</taxon>
    </lineage>
</organism>
<dbReference type="EC" id="3.6.-.-" evidence="1"/>
<dbReference type="EMBL" id="CP000577">
    <property type="protein sequence ID" value="ABN77993.1"/>
    <property type="molecule type" value="Genomic_DNA"/>
</dbReference>
<dbReference type="RefSeq" id="WP_011841950.1">
    <property type="nucleotide sequence ID" value="NC_009049.1"/>
</dbReference>
<dbReference type="SMR" id="A3PNS7"/>
<dbReference type="KEGG" id="rsh:Rsph17029_2891"/>
<dbReference type="HOGENOM" id="CLU_019624_3_1_5"/>
<dbReference type="GO" id="GO:0005737">
    <property type="term" value="C:cytoplasm"/>
    <property type="evidence" value="ECO:0007669"/>
    <property type="project" value="UniProtKB-SubCell"/>
</dbReference>
<dbReference type="GO" id="GO:0005525">
    <property type="term" value="F:GTP binding"/>
    <property type="evidence" value="ECO:0007669"/>
    <property type="project" value="UniProtKB-UniRule"/>
</dbReference>
<dbReference type="GO" id="GO:0003924">
    <property type="term" value="F:GTPase activity"/>
    <property type="evidence" value="ECO:0007669"/>
    <property type="project" value="UniProtKB-UniRule"/>
</dbReference>
<dbReference type="GO" id="GO:0046872">
    <property type="term" value="F:metal ion binding"/>
    <property type="evidence" value="ECO:0007669"/>
    <property type="project" value="UniProtKB-KW"/>
</dbReference>
<dbReference type="GO" id="GO:0030488">
    <property type="term" value="P:tRNA methylation"/>
    <property type="evidence" value="ECO:0007669"/>
    <property type="project" value="TreeGrafter"/>
</dbReference>
<dbReference type="GO" id="GO:0002098">
    <property type="term" value="P:tRNA wobble uridine modification"/>
    <property type="evidence" value="ECO:0007669"/>
    <property type="project" value="TreeGrafter"/>
</dbReference>
<dbReference type="CDD" id="cd04164">
    <property type="entry name" value="trmE"/>
    <property type="match status" value="1"/>
</dbReference>
<dbReference type="CDD" id="cd14858">
    <property type="entry name" value="TrmE_N"/>
    <property type="match status" value="1"/>
</dbReference>
<dbReference type="Gene3D" id="3.40.50.300">
    <property type="entry name" value="P-loop containing nucleotide triphosphate hydrolases"/>
    <property type="match status" value="1"/>
</dbReference>
<dbReference type="Gene3D" id="3.30.1360.120">
    <property type="entry name" value="Probable tRNA modification gtpase trme, domain 1"/>
    <property type="match status" value="1"/>
</dbReference>
<dbReference type="Gene3D" id="1.20.120.430">
    <property type="entry name" value="tRNA modification GTPase MnmE domain 2"/>
    <property type="match status" value="1"/>
</dbReference>
<dbReference type="HAMAP" id="MF_00379">
    <property type="entry name" value="GTPase_MnmE"/>
    <property type="match status" value="1"/>
</dbReference>
<dbReference type="InterPro" id="IPR031168">
    <property type="entry name" value="G_TrmE"/>
</dbReference>
<dbReference type="InterPro" id="IPR006073">
    <property type="entry name" value="GTP-bd"/>
</dbReference>
<dbReference type="InterPro" id="IPR018948">
    <property type="entry name" value="GTP-bd_TrmE_N"/>
</dbReference>
<dbReference type="InterPro" id="IPR004520">
    <property type="entry name" value="GTPase_MnmE"/>
</dbReference>
<dbReference type="InterPro" id="IPR027368">
    <property type="entry name" value="MnmE_dom2"/>
</dbReference>
<dbReference type="InterPro" id="IPR025867">
    <property type="entry name" value="MnmE_helical"/>
</dbReference>
<dbReference type="InterPro" id="IPR027417">
    <property type="entry name" value="P-loop_NTPase"/>
</dbReference>
<dbReference type="InterPro" id="IPR005225">
    <property type="entry name" value="Small_GTP-bd"/>
</dbReference>
<dbReference type="InterPro" id="IPR027266">
    <property type="entry name" value="TrmE/GcvT_dom1"/>
</dbReference>
<dbReference type="NCBIfam" id="NF003661">
    <property type="entry name" value="PRK05291.1-3"/>
    <property type="match status" value="1"/>
</dbReference>
<dbReference type="NCBIfam" id="TIGR00231">
    <property type="entry name" value="small_GTP"/>
    <property type="match status" value="1"/>
</dbReference>
<dbReference type="PANTHER" id="PTHR42714">
    <property type="entry name" value="TRNA MODIFICATION GTPASE GTPBP3"/>
    <property type="match status" value="1"/>
</dbReference>
<dbReference type="PANTHER" id="PTHR42714:SF2">
    <property type="entry name" value="TRNA MODIFICATION GTPASE GTPBP3, MITOCHONDRIAL"/>
    <property type="match status" value="1"/>
</dbReference>
<dbReference type="Pfam" id="PF01926">
    <property type="entry name" value="MMR_HSR1"/>
    <property type="match status" value="1"/>
</dbReference>
<dbReference type="Pfam" id="PF12631">
    <property type="entry name" value="MnmE_helical"/>
    <property type="match status" value="1"/>
</dbReference>
<dbReference type="Pfam" id="PF10396">
    <property type="entry name" value="TrmE_N"/>
    <property type="match status" value="1"/>
</dbReference>
<dbReference type="SUPFAM" id="SSF52540">
    <property type="entry name" value="P-loop containing nucleoside triphosphate hydrolases"/>
    <property type="match status" value="1"/>
</dbReference>
<dbReference type="SUPFAM" id="SSF116878">
    <property type="entry name" value="TrmE connector domain"/>
    <property type="match status" value="1"/>
</dbReference>
<dbReference type="PROSITE" id="PS51709">
    <property type="entry name" value="G_TRME"/>
    <property type="match status" value="1"/>
</dbReference>